<name>HEAT6_RAT</name>
<proteinExistence type="evidence at protein level"/>
<accession>A1EC95</accession>
<reference key="1">
    <citation type="journal article" date="2007" name="Genomics">
        <title>Fine-mapping and comprehensive transcript analysis reveals nonsynonymous variants within a novel 1.17 Mb blood pressure QTL region on rat chromosome 10.</title>
        <authorList>
            <person name="Saad Y."/>
            <person name="Garrett M.R."/>
            <person name="Manickavasagam E."/>
            <person name="Yerga-Woolwine S."/>
            <person name="Farms P."/>
            <person name="Radecki T."/>
            <person name="Joe B."/>
        </authorList>
    </citation>
    <scope>NUCLEOTIDE SEQUENCE [MRNA]</scope>
    <source>
        <strain>Dahl salt-sensitive</strain>
        <strain>Lewis</strain>
    </source>
</reference>
<reference key="2">
    <citation type="journal article" date="2012" name="Nat. Commun.">
        <title>Quantitative maps of protein phosphorylation sites across 14 different rat organs and tissues.</title>
        <authorList>
            <person name="Lundby A."/>
            <person name="Secher A."/>
            <person name="Lage K."/>
            <person name="Nordsborg N.B."/>
            <person name="Dmytriyev A."/>
            <person name="Lundby C."/>
            <person name="Olsen J.V."/>
        </authorList>
    </citation>
    <scope>PHOSPHORYLATION [LARGE SCALE ANALYSIS] AT THR-689 AND SER-714</scope>
    <scope>IDENTIFICATION BY MASS SPECTROMETRY [LARGE SCALE ANALYSIS]</scope>
</reference>
<evidence type="ECO:0000250" key="1">
    <source>
        <dbReference type="UniProtKB" id="Q6AI08"/>
    </source>
</evidence>
<evidence type="ECO:0000256" key="2">
    <source>
        <dbReference type="SAM" id="MobiDB-lite"/>
    </source>
</evidence>
<evidence type="ECO:0007744" key="3">
    <source>
    </source>
</evidence>
<keyword id="KW-0597">Phosphoprotein</keyword>
<keyword id="KW-1185">Reference proteome</keyword>
<keyword id="KW-0677">Repeat</keyword>
<dbReference type="EMBL" id="EF122002">
    <property type="protein sequence ID" value="ABL63441.1"/>
    <property type="molecule type" value="mRNA"/>
</dbReference>
<dbReference type="EMBL" id="EF122003">
    <property type="protein sequence ID" value="ABL63442.1"/>
    <property type="molecule type" value="mRNA"/>
</dbReference>
<dbReference type="RefSeq" id="NP_001073366.1">
    <property type="nucleotide sequence ID" value="NM_001079897.1"/>
</dbReference>
<dbReference type="FunCoup" id="A1EC95">
    <property type="interactions" value="2779"/>
</dbReference>
<dbReference type="STRING" id="10116.ENSRNOP00000003492"/>
<dbReference type="CarbonylDB" id="A1EC95"/>
<dbReference type="iPTMnet" id="A1EC95"/>
<dbReference type="PhosphoSitePlus" id="A1EC95"/>
<dbReference type="jPOST" id="A1EC95"/>
<dbReference type="PaxDb" id="10116-ENSRNOP00000003492"/>
<dbReference type="PeptideAtlas" id="A1EC95"/>
<dbReference type="GeneID" id="497972"/>
<dbReference type="KEGG" id="rno:497972"/>
<dbReference type="AGR" id="RGD:1566204"/>
<dbReference type="CTD" id="63897"/>
<dbReference type="RGD" id="1566204">
    <property type="gene designation" value="Heatr6"/>
</dbReference>
<dbReference type="VEuPathDB" id="HostDB:ENSRNOG00000002542"/>
<dbReference type="eggNOG" id="KOG4535">
    <property type="taxonomic scope" value="Eukaryota"/>
</dbReference>
<dbReference type="HOGENOM" id="CLU_007141_1_0_1"/>
<dbReference type="InParanoid" id="A1EC95"/>
<dbReference type="PhylomeDB" id="A1EC95"/>
<dbReference type="TreeFam" id="TF324244"/>
<dbReference type="PRO" id="PR:A1EC95"/>
<dbReference type="Proteomes" id="UP000002494">
    <property type="component" value="Chromosome 10"/>
</dbReference>
<dbReference type="Bgee" id="ENSRNOG00000002542">
    <property type="expression patterns" value="Expressed in skeletal muscle tissue and 19 other cell types or tissues"/>
</dbReference>
<dbReference type="FunFam" id="1.25.10.10:FF:000171">
    <property type="entry name" value="HEAT repeat-containing protein 6"/>
    <property type="match status" value="1"/>
</dbReference>
<dbReference type="Gene3D" id="1.25.10.10">
    <property type="entry name" value="Leucine-rich Repeat Variant"/>
    <property type="match status" value="3"/>
</dbReference>
<dbReference type="InterPro" id="IPR011989">
    <property type="entry name" value="ARM-like"/>
</dbReference>
<dbReference type="InterPro" id="IPR016024">
    <property type="entry name" value="ARM-type_fold"/>
</dbReference>
<dbReference type="InterPro" id="IPR025283">
    <property type="entry name" value="DUF4042"/>
</dbReference>
<dbReference type="InterPro" id="IPR052107">
    <property type="entry name" value="HEAT6"/>
</dbReference>
<dbReference type="PANTHER" id="PTHR13366:SF0">
    <property type="entry name" value="HEAT REPEAT-CONTAINING PROTEIN 6"/>
    <property type="match status" value="1"/>
</dbReference>
<dbReference type="PANTHER" id="PTHR13366">
    <property type="entry name" value="MALARIA ANTIGEN-RELATED"/>
    <property type="match status" value="1"/>
</dbReference>
<dbReference type="Pfam" id="PF13251">
    <property type="entry name" value="DUF4042"/>
    <property type="match status" value="1"/>
</dbReference>
<dbReference type="SUPFAM" id="SSF48371">
    <property type="entry name" value="ARM repeat"/>
    <property type="match status" value="1"/>
</dbReference>
<protein>
    <recommendedName>
        <fullName>HEAT repeat-containing protein 6</fullName>
    </recommendedName>
</protein>
<gene>
    <name type="primary">Heatr6</name>
</gene>
<organism>
    <name type="scientific">Rattus norvegicus</name>
    <name type="common">Rat</name>
    <dbReference type="NCBI Taxonomy" id="10116"/>
    <lineage>
        <taxon>Eukaryota</taxon>
        <taxon>Metazoa</taxon>
        <taxon>Chordata</taxon>
        <taxon>Craniata</taxon>
        <taxon>Vertebrata</taxon>
        <taxon>Euteleostomi</taxon>
        <taxon>Mammalia</taxon>
        <taxon>Eutheria</taxon>
        <taxon>Euarchontoglires</taxon>
        <taxon>Glires</taxon>
        <taxon>Rodentia</taxon>
        <taxon>Myomorpha</taxon>
        <taxon>Muroidea</taxon>
        <taxon>Muridae</taxon>
        <taxon>Murinae</taxon>
        <taxon>Rattus</taxon>
    </lineage>
</organism>
<sequence length="1252" mass="136505">MSALPGSKLSERVRTVGWQISRPYFCHFFPIRITAPPATCSANKGFPELEHARPCPKRCPGSISQAIHVGKMAAVQVAASLPCEQPREAPRELSLEQNNGFRRLSARLRALQPDDSTVSRMEIHLLFDQLISENYCEGGGVAPEDVSALLVRACQLVPLNQNHLVSKVSQLIHRLLNRLQVIVDEQNLDFLLTYTISAIQQCSPWTHMEILQALAALVYCNGSKCQKHLPDLLGKSGLLMKLSDVTHSDPEVRRAAVHCMANLCLSVPGQPYLEESYQLVCFQAFLTILQSPKSSDMDDITFCMLLQNALKGIQSLLNGGKMRLTQTEHLGALLAVLKKAMFHGLPGLNIEMPAVLYPTPLPQYDGRSPVKPQQPESSAARPSANKKKKYKVKPKKTQQGEKAEEEEPYGEVDAAPGLSMDQANTCVESAWCSSPWGSQGLPVDGGRATGREQVSSPFTISSWKRVSSSESDYSDAEGGMQGKMRSYQAKVRQGALACFLSTIKSIEKKVLYGYWSAFVPDTPELGSPQSVSLMTLTLKDPSPKTRACALQVLSAILEGSKQFLSVAEDTSDHKRAFTPFSVTIASSIRELHRCLLLALVAESSSQTLTQIIKCLANLVSNAPYNRLKLSLLTKVWNHIKPYIRHKDVNVRVSSLTLLGAVVSTHAPLPEVQLLLQQPCSSGRSSSSATPHLSTPDGWKALPAGPSLEEASLSSPKGTAEPCWLIRLCISTVVLPKEDSCSGSDAGSALGSTYEPSPMRLEALQVLAHLARGYFSMAQLYLMELGEVICKCMCEANPSIQLHGVKLLEELGTGLIQQYKPDSSTAPEQRVPVHMVAMFWTAMLNGPLPRALQSTEHPTLQASACDALSSILPEAFSSLPNDKQILCITMLLGLNDSKNHLVKAATSRALGVYVLFPCLRQDVIFVADTANAILMSLQDKSLNVRAKAAWSLGNLTDTLIVNMDTPDPSFQDEFSGLLLLKMLQSAIQASTDKDKVKSNAVRALGNLLHFLQPSHIERPRFAEIIEESIQALISTVVNEAAMKVRWNACYAMGNVFKNPALPLGTAPWTSQAYKALTSVVMSCKNFKVRIRSAAALSVPGRRAQYGSLEQFSQIWSALVTALQRSEDTTDFLEFKYCASLRTHVCQALLHLLGLASASDLPCIQETLTVNGDMIRSYILQFLKSGAGGDDPGAVHSPQERNQMVRVALRHIHSVQALAGDTAKGAIVGFLEDILTVHCDSSGERAVLRGSLDQ</sequence>
<feature type="chain" id="PRO_0000337176" description="HEAT repeat-containing protein 6">
    <location>
        <begin position="1"/>
        <end position="1252"/>
    </location>
</feature>
<feature type="repeat" description="HEAT 1">
    <location>
        <begin position="230"/>
        <end position="269"/>
    </location>
</feature>
<feature type="repeat" description="HEAT 2">
    <location>
        <begin position="524"/>
        <end position="562"/>
    </location>
</feature>
<feature type="repeat" description="HEAT 3">
    <location>
        <begin position="586"/>
        <end position="624"/>
    </location>
</feature>
<feature type="repeat" description="HEAT 4">
    <location>
        <begin position="630"/>
        <end position="667"/>
    </location>
</feature>
<feature type="region of interest" description="Disordered" evidence="2">
    <location>
        <begin position="365"/>
        <end position="417"/>
    </location>
</feature>
<feature type="compositionally biased region" description="Basic residues" evidence="2">
    <location>
        <begin position="384"/>
        <end position="396"/>
    </location>
</feature>
<feature type="modified residue" description="Phosphoserine" evidence="1">
    <location>
        <position position="471"/>
    </location>
</feature>
<feature type="modified residue" description="Phosphoserine" evidence="1">
    <location>
        <position position="474"/>
    </location>
</feature>
<feature type="modified residue" description="Phosphothreonine" evidence="3">
    <location>
        <position position="689"/>
    </location>
</feature>
<feature type="modified residue" description="Phosphoserine" evidence="3">
    <location>
        <position position="714"/>
    </location>
</feature>